<dbReference type="EMBL" id="BX950851">
    <property type="protein sequence ID" value="CAG76916.1"/>
    <property type="molecule type" value="Genomic_DNA"/>
</dbReference>
<dbReference type="RefSeq" id="WP_011095504.1">
    <property type="nucleotide sequence ID" value="NC_004547.2"/>
</dbReference>
<dbReference type="SMR" id="Q6CZY2"/>
<dbReference type="STRING" id="218491.ECA4019"/>
<dbReference type="GeneID" id="57210683"/>
<dbReference type="KEGG" id="eca:ECA4019"/>
<dbReference type="eggNOG" id="COG0094">
    <property type="taxonomic scope" value="Bacteria"/>
</dbReference>
<dbReference type="HOGENOM" id="CLU_061015_2_1_6"/>
<dbReference type="OrthoDB" id="9806626at2"/>
<dbReference type="Proteomes" id="UP000007966">
    <property type="component" value="Chromosome"/>
</dbReference>
<dbReference type="GO" id="GO:1990904">
    <property type="term" value="C:ribonucleoprotein complex"/>
    <property type="evidence" value="ECO:0007669"/>
    <property type="project" value="UniProtKB-KW"/>
</dbReference>
<dbReference type="GO" id="GO:0005840">
    <property type="term" value="C:ribosome"/>
    <property type="evidence" value="ECO:0007669"/>
    <property type="project" value="UniProtKB-KW"/>
</dbReference>
<dbReference type="GO" id="GO:0019843">
    <property type="term" value="F:rRNA binding"/>
    <property type="evidence" value="ECO:0007669"/>
    <property type="project" value="UniProtKB-UniRule"/>
</dbReference>
<dbReference type="GO" id="GO:0003735">
    <property type="term" value="F:structural constituent of ribosome"/>
    <property type="evidence" value="ECO:0007669"/>
    <property type="project" value="InterPro"/>
</dbReference>
<dbReference type="GO" id="GO:0000049">
    <property type="term" value="F:tRNA binding"/>
    <property type="evidence" value="ECO:0007669"/>
    <property type="project" value="UniProtKB-UniRule"/>
</dbReference>
<dbReference type="GO" id="GO:0006412">
    <property type="term" value="P:translation"/>
    <property type="evidence" value="ECO:0007669"/>
    <property type="project" value="UniProtKB-UniRule"/>
</dbReference>
<dbReference type="FunFam" id="3.30.1440.10:FF:000001">
    <property type="entry name" value="50S ribosomal protein L5"/>
    <property type="match status" value="1"/>
</dbReference>
<dbReference type="Gene3D" id="3.30.1440.10">
    <property type="match status" value="1"/>
</dbReference>
<dbReference type="HAMAP" id="MF_01333_B">
    <property type="entry name" value="Ribosomal_uL5_B"/>
    <property type="match status" value="1"/>
</dbReference>
<dbReference type="InterPro" id="IPR002132">
    <property type="entry name" value="Ribosomal_uL5"/>
</dbReference>
<dbReference type="InterPro" id="IPR020930">
    <property type="entry name" value="Ribosomal_uL5_bac-type"/>
</dbReference>
<dbReference type="InterPro" id="IPR031309">
    <property type="entry name" value="Ribosomal_uL5_C"/>
</dbReference>
<dbReference type="InterPro" id="IPR020929">
    <property type="entry name" value="Ribosomal_uL5_CS"/>
</dbReference>
<dbReference type="InterPro" id="IPR022803">
    <property type="entry name" value="Ribosomal_uL5_dom_sf"/>
</dbReference>
<dbReference type="InterPro" id="IPR031310">
    <property type="entry name" value="Ribosomal_uL5_N"/>
</dbReference>
<dbReference type="NCBIfam" id="NF000585">
    <property type="entry name" value="PRK00010.1"/>
    <property type="match status" value="1"/>
</dbReference>
<dbReference type="PANTHER" id="PTHR11994">
    <property type="entry name" value="60S RIBOSOMAL PROTEIN L11-RELATED"/>
    <property type="match status" value="1"/>
</dbReference>
<dbReference type="Pfam" id="PF00281">
    <property type="entry name" value="Ribosomal_L5"/>
    <property type="match status" value="1"/>
</dbReference>
<dbReference type="Pfam" id="PF00673">
    <property type="entry name" value="Ribosomal_L5_C"/>
    <property type="match status" value="1"/>
</dbReference>
<dbReference type="PIRSF" id="PIRSF002161">
    <property type="entry name" value="Ribosomal_L5"/>
    <property type="match status" value="1"/>
</dbReference>
<dbReference type="SUPFAM" id="SSF55282">
    <property type="entry name" value="RL5-like"/>
    <property type="match status" value="1"/>
</dbReference>
<dbReference type="PROSITE" id="PS00358">
    <property type="entry name" value="RIBOSOMAL_L5"/>
    <property type="match status" value="1"/>
</dbReference>
<proteinExistence type="inferred from homology"/>
<name>RL5_PECAS</name>
<organism>
    <name type="scientific">Pectobacterium atrosepticum (strain SCRI 1043 / ATCC BAA-672)</name>
    <name type="common">Erwinia carotovora subsp. atroseptica</name>
    <dbReference type="NCBI Taxonomy" id="218491"/>
    <lineage>
        <taxon>Bacteria</taxon>
        <taxon>Pseudomonadati</taxon>
        <taxon>Pseudomonadota</taxon>
        <taxon>Gammaproteobacteria</taxon>
        <taxon>Enterobacterales</taxon>
        <taxon>Pectobacteriaceae</taxon>
        <taxon>Pectobacterium</taxon>
    </lineage>
</organism>
<comment type="function">
    <text evidence="1">This is one of the proteins that bind and probably mediate the attachment of the 5S RNA into the large ribosomal subunit, where it forms part of the central protuberance. In the 70S ribosome it contacts protein S13 of the 30S subunit (bridge B1b), connecting the 2 subunits; this bridge is implicated in subunit movement. Contacts the P site tRNA; the 5S rRNA and some of its associated proteins might help stabilize positioning of ribosome-bound tRNAs.</text>
</comment>
<comment type="subunit">
    <text evidence="1">Part of the 50S ribosomal subunit; part of the 5S rRNA/L5/L18/L25 subcomplex. Contacts the 5S rRNA and the P site tRNA. Forms a bridge to the 30S subunit in the 70S ribosome.</text>
</comment>
<comment type="similarity">
    <text evidence="1">Belongs to the universal ribosomal protein uL5 family.</text>
</comment>
<keyword id="KW-1185">Reference proteome</keyword>
<keyword id="KW-0687">Ribonucleoprotein</keyword>
<keyword id="KW-0689">Ribosomal protein</keyword>
<keyword id="KW-0694">RNA-binding</keyword>
<keyword id="KW-0699">rRNA-binding</keyword>
<keyword id="KW-0820">tRNA-binding</keyword>
<accession>Q6CZY2</accession>
<sequence>MAKLHDYYKDEVVKKLMTEFNYNSVMQVPRVEKITLNMGVGEAIADKKLLDNAAADLTAISGQKPLITKARKSVAGFKIRQGYPIGCKVTLRGERMWEFLERLISIAVPRIRDFRGLSAKSFDGRGNYSMGVREQIIFPEIDYDKVDRVRGLDITITTTAKSDDEGRALLAAFNFPFRK</sequence>
<evidence type="ECO:0000255" key="1">
    <source>
        <dbReference type="HAMAP-Rule" id="MF_01333"/>
    </source>
</evidence>
<evidence type="ECO:0000305" key="2"/>
<protein>
    <recommendedName>
        <fullName evidence="1">Large ribosomal subunit protein uL5</fullName>
    </recommendedName>
    <alternativeName>
        <fullName evidence="2">50S ribosomal protein L5</fullName>
    </alternativeName>
</protein>
<feature type="chain" id="PRO_0000243000" description="Large ribosomal subunit protein uL5">
    <location>
        <begin position="1"/>
        <end position="179"/>
    </location>
</feature>
<gene>
    <name evidence="1" type="primary">rplE</name>
    <name type="ordered locus">ECA4019</name>
</gene>
<reference key="1">
    <citation type="journal article" date="2004" name="Proc. Natl. Acad. Sci. U.S.A.">
        <title>Genome sequence of the enterobacterial phytopathogen Erwinia carotovora subsp. atroseptica and characterization of virulence factors.</title>
        <authorList>
            <person name="Bell K.S."/>
            <person name="Sebaihia M."/>
            <person name="Pritchard L."/>
            <person name="Holden M.T.G."/>
            <person name="Hyman L.J."/>
            <person name="Holeva M.C."/>
            <person name="Thomson N.R."/>
            <person name="Bentley S.D."/>
            <person name="Churcher L.J.C."/>
            <person name="Mungall K."/>
            <person name="Atkin R."/>
            <person name="Bason N."/>
            <person name="Brooks K."/>
            <person name="Chillingworth T."/>
            <person name="Clark K."/>
            <person name="Doggett J."/>
            <person name="Fraser A."/>
            <person name="Hance Z."/>
            <person name="Hauser H."/>
            <person name="Jagels K."/>
            <person name="Moule S."/>
            <person name="Norbertczak H."/>
            <person name="Ormond D."/>
            <person name="Price C."/>
            <person name="Quail M.A."/>
            <person name="Sanders M."/>
            <person name="Walker D."/>
            <person name="Whitehead S."/>
            <person name="Salmond G.P.C."/>
            <person name="Birch P.R.J."/>
            <person name="Parkhill J."/>
            <person name="Toth I.K."/>
        </authorList>
    </citation>
    <scope>NUCLEOTIDE SEQUENCE [LARGE SCALE GENOMIC DNA]</scope>
    <source>
        <strain>SCRI 1043 / ATCC BAA-672</strain>
    </source>
</reference>